<feature type="chain" id="PRO_0000122966" description="Protein DSS1 HOMOLOG ON CHROMOSOME V">
    <location>
        <begin position="1"/>
        <end position="73"/>
    </location>
</feature>
<feature type="sequence conflict" description="In Ref. 4; AAM64332." evidence="6" ref="4">
    <original>D</original>
    <variation>G</variation>
    <location>
        <position position="21"/>
    </location>
</feature>
<protein>
    <recommendedName>
        <fullName evidence="5">Protein DSS1 HOMOLOG ON CHROMOSOME V</fullName>
        <shortName evidence="5">AtDSS1(V)</shortName>
    </recommendedName>
    <alternativeName>
        <fullName>Probable 26S proteasome complex subunit sem1-2</fullName>
    </alternativeName>
</protein>
<proteinExistence type="evidence at protein level"/>
<organism>
    <name type="scientific">Arabidopsis thaliana</name>
    <name type="common">Mouse-ear cress</name>
    <dbReference type="NCBI Taxonomy" id="3702"/>
    <lineage>
        <taxon>Eukaryota</taxon>
        <taxon>Viridiplantae</taxon>
        <taxon>Streptophyta</taxon>
        <taxon>Embryophyta</taxon>
        <taxon>Tracheophyta</taxon>
        <taxon>Spermatophyta</taxon>
        <taxon>Magnoliopsida</taxon>
        <taxon>eudicotyledons</taxon>
        <taxon>Gunneridae</taxon>
        <taxon>Pentapetalae</taxon>
        <taxon>rosids</taxon>
        <taxon>malvids</taxon>
        <taxon>Brassicales</taxon>
        <taxon>Brassicaceae</taxon>
        <taxon>Camelineae</taxon>
        <taxon>Arabidopsis</taxon>
    </lineage>
</organism>
<reference key="1">
    <citation type="journal article" date="1998" name="DNA Res.">
        <title>Structural analysis of Arabidopsis thaliana chromosome 5. V. Sequence features of the regions of 1,381,565 bp covered by twenty one physically assigned P1 and TAC clones.</title>
        <authorList>
            <person name="Kaneko T."/>
            <person name="Kotani H."/>
            <person name="Nakamura Y."/>
            <person name="Sato S."/>
            <person name="Asamizu E."/>
            <person name="Miyajima N."/>
            <person name="Tabata S."/>
        </authorList>
    </citation>
    <scope>NUCLEOTIDE SEQUENCE [LARGE SCALE GENOMIC DNA]</scope>
    <source>
        <strain>cv. Columbia</strain>
    </source>
</reference>
<reference key="2">
    <citation type="journal article" date="2017" name="Plant J.">
        <title>Araport11: a complete reannotation of the Arabidopsis thaliana reference genome.</title>
        <authorList>
            <person name="Cheng C.Y."/>
            <person name="Krishnakumar V."/>
            <person name="Chan A.P."/>
            <person name="Thibaud-Nissen F."/>
            <person name="Schobel S."/>
            <person name="Town C.D."/>
        </authorList>
    </citation>
    <scope>GENOME REANNOTATION</scope>
    <source>
        <strain>cv. Columbia</strain>
    </source>
</reference>
<reference key="3">
    <citation type="journal article" date="2003" name="Science">
        <title>Empirical analysis of transcriptional activity in the Arabidopsis genome.</title>
        <authorList>
            <person name="Yamada K."/>
            <person name="Lim J."/>
            <person name="Dale J.M."/>
            <person name="Chen H."/>
            <person name="Shinn P."/>
            <person name="Palm C.J."/>
            <person name="Southwick A.M."/>
            <person name="Wu H.C."/>
            <person name="Kim C.J."/>
            <person name="Nguyen M."/>
            <person name="Pham P.K."/>
            <person name="Cheuk R.F."/>
            <person name="Karlin-Newmann G."/>
            <person name="Liu S.X."/>
            <person name="Lam B."/>
            <person name="Sakano H."/>
            <person name="Wu T."/>
            <person name="Yu G."/>
            <person name="Miranda M."/>
            <person name="Quach H.L."/>
            <person name="Tripp M."/>
            <person name="Chang C.H."/>
            <person name="Lee J.M."/>
            <person name="Toriumi M.J."/>
            <person name="Chan M.M."/>
            <person name="Tang C.C."/>
            <person name="Onodera C.S."/>
            <person name="Deng J.M."/>
            <person name="Akiyama K."/>
            <person name="Ansari Y."/>
            <person name="Arakawa T."/>
            <person name="Banh J."/>
            <person name="Banno F."/>
            <person name="Bowser L."/>
            <person name="Brooks S.Y."/>
            <person name="Carninci P."/>
            <person name="Chao Q."/>
            <person name="Choy N."/>
            <person name="Enju A."/>
            <person name="Goldsmith A.D."/>
            <person name="Gurjal M."/>
            <person name="Hansen N.F."/>
            <person name="Hayashizaki Y."/>
            <person name="Johnson-Hopson C."/>
            <person name="Hsuan V.W."/>
            <person name="Iida K."/>
            <person name="Karnes M."/>
            <person name="Khan S."/>
            <person name="Koesema E."/>
            <person name="Ishida J."/>
            <person name="Jiang P.X."/>
            <person name="Jones T."/>
            <person name="Kawai J."/>
            <person name="Kamiya A."/>
            <person name="Meyers C."/>
            <person name="Nakajima M."/>
            <person name="Narusaka M."/>
            <person name="Seki M."/>
            <person name="Sakurai T."/>
            <person name="Satou M."/>
            <person name="Tamse R."/>
            <person name="Vaysberg M."/>
            <person name="Wallender E.K."/>
            <person name="Wong C."/>
            <person name="Yamamura Y."/>
            <person name="Yuan S."/>
            <person name="Shinozaki K."/>
            <person name="Davis R.W."/>
            <person name="Theologis A."/>
            <person name="Ecker J.R."/>
        </authorList>
    </citation>
    <scope>NUCLEOTIDE SEQUENCE [LARGE SCALE MRNA]</scope>
    <source>
        <strain>cv. Columbia</strain>
    </source>
</reference>
<reference key="4">
    <citation type="submission" date="2002-03" db="EMBL/GenBank/DDBJ databases">
        <title>Full-length cDNA from Arabidopsis thaliana.</title>
        <authorList>
            <person name="Brover V.V."/>
            <person name="Troukhan M.E."/>
            <person name="Alexandrov N.A."/>
            <person name="Lu Y.-P."/>
            <person name="Flavell R.B."/>
            <person name="Feldmann K.A."/>
        </authorList>
    </citation>
    <scope>NUCLEOTIDE SEQUENCE [LARGE SCALE MRNA]</scope>
</reference>
<reference key="5">
    <citation type="journal article" date="2006" name="Plant Physiol.">
        <title>Interaction between Arabidopsis Brca2 and its partners Rad51, Dmc1, and Dss1.</title>
        <authorList>
            <person name="Dray E."/>
            <person name="Siaud N."/>
            <person name="Dubois E."/>
            <person name="Doutriaux M.P."/>
        </authorList>
    </citation>
    <scope>IDENTIFICATION</scope>
    <scope>INTERACTION WITH BRCA2B</scope>
</reference>
<reference key="6">
    <citation type="journal article" date="2010" name="Plant J.">
        <title>Arabidopsis homolog of the yeast TREX-2 mRNA export complex: components and anchoring nucleoporin.</title>
        <authorList>
            <person name="Lu Q."/>
            <person name="Tang X."/>
            <person name="Tian G."/>
            <person name="Wang F."/>
            <person name="Liu K."/>
            <person name="Nguyen V."/>
            <person name="Kohalmi S.E."/>
            <person name="Keller W.A."/>
            <person name="Tsang E.W."/>
            <person name="Harada J.J."/>
            <person name="Rothstein S.J."/>
            <person name="Cui Y."/>
        </authorList>
    </citation>
    <scope>INTERACTION WITH EER5</scope>
</reference>
<reference key="7">
    <citation type="journal article" date="2012" name="Plant Signal. Behav.">
        <title>Evidence that the Arabidopsis Ubiquitin C-terminal Hydrolases 1 and 2 associate with the 26S proteasome and the TREX-2 complex.</title>
        <authorList>
            <person name="Tian G."/>
            <person name="Lu Q."/>
            <person name="Kohalmi S.E."/>
            <person name="Rothstein S.J."/>
            <person name="Cui Y."/>
        </authorList>
    </citation>
    <scope>INTERACTION WITH UCH1 AND UCH2</scope>
</reference>
<keyword id="KW-0647">Proteasome</keyword>
<keyword id="KW-1185">Reference proteome</keyword>
<evidence type="ECO:0000250" key="1">
    <source>
        <dbReference type="UniProtKB" id="P60896"/>
    </source>
</evidence>
<evidence type="ECO:0000269" key="2">
    <source>
    </source>
</evidence>
<evidence type="ECO:0000269" key="3">
    <source>
    </source>
</evidence>
<evidence type="ECO:0000269" key="4">
    <source>
    </source>
</evidence>
<evidence type="ECO:0000303" key="5">
    <source>
    </source>
</evidence>
<evidence type="ECO:0000305" key="6"/>
<evidence type="ECO:0000312" key="7">
    <source>
        <dbReference type="Araport" id="AT5G45010"/>
    </source>
</evidence>
<evidence type="ECO:0000312" key="8">
    <source>
        <dbReference type="EMBL" id="BAB10884.1"/>
    </source>
</evidence>
<comment type="function">
    <text evidence="1 3">Subunit of the 26S proteasome which plays a role in ubiquitin-dependent proteolysis (By similarity). Also associates with the TREX-2 complex that is required for transcription-coupled mRNA export (PubMed:19843313).</text>
</comment>
<comment type="subunit">
    <text evidence="1 2 3 4">Part of the 26S proteasome (By similarity). Interacts with BRCA2B (PubMed:16415210). Interacts with EER5 (PubMed:19843313). Interacts with UCH1 and UCH2 (PubMed:22951400).</text>
</comment>
<comment type="interaction">
    <interactant intactId="EBI-931034">
        <id>Q9FL96</id>
    </interactant>
    <interactant intactId="EBI-307707">
        <id>Q7Y1C4</id>
        <label>BRCA2B</label>
    </interactant>
    <organismsDiffer>false</organismsDiffer>
    <experiments>2</experiments>
</comment>
<comment type="similarity">
    <text evidence="6">Belongs to the DSS1/SEM1 family.</text>
</comment>
<gene>
    <name evidence="5" type="primary">DSS1(V)</name>
    <name evidence="7" type="ordered locus">At5g45010</name>
    <name evidence="8" type="ORF">K21C13.20</name>
</gene>
<accession>Q9FL96</accession>
<accession>Q8LD17</accession>
<dbReference type="EMBL" id="AB010693">
    <property type="protein sequence ID" value="BAB10884.1"/>
    <property type="molecule type" value="Genomic_DNA"/>
</dbReference>
<dbReference type="EMBL" id="CP002688">
    <property type="protein sequence ID" value="AED95188.1"/>
    <property type="molecule type" value="Genomic_DNA"/>
</dbReference>
<dbReference type="EMBL" id="AY063839">
    <property type="protein sequence ID" value="AAL36195.1"/>
    <property type="molecule type" value="mRNA"/>
</dbReference>
<dbReference type="EMBL" id="AY091311">
    <property type="protein sequence ID" value="AAM14250.1"/>
    <property type="molecule type" value="mRNA"/>
</dbReference>
<dbReference type="EMBL" id="AY086259">
    <property type="protein sequence ID" value="AAM64332.1"/>
    <property type="molecule type" value="mRNA"/>
</dbReference>
<dbReference type="RefSeq" id="NP_199314.1">
    <property type="nucleotide sequence ID" value="NM_123869.4"/>
</dbReference>
<dbReference type="SMR" id="Q9FL96"/>
<dbReference type="BioGRID" id="19781">
    <property type="interactions" value="6"/>
</dbReference>
<dbReference type="FunCoup" id="Q9FL96">
    <property type="interactions" value="400"/>
</dbReference>
<dbReference type="IntAct" id="Q9FL96">
    <property type="interactions" value="5"/>
</dbReference>
<dbReference type="STRING" id="3702.Q9FL96"/>
<dbReference type="iPTMnet" id="Q9FL96"/>
<dbReference type="PaxDb" id="3702-AT5G45010.1"/>
<dbReference type="EnsemblPlants" id="AT5G45010.1">
    <property type="protein sequence ID" value="AT5G45010.1"/>
    <property type="gene ID" value="AT5G45010"/>
</dbReference>
<dbReference type="GeneID" id="834532"/>
<dbReference type="Gramene" id="AT5G45010.1">
    <property type="protein sequence ID" value="AT5G45010.1"/>
    <property type="gene ID" value="AT5G45010"/>
</dbReference>
<dbReference type="KEGG" id="ath:AT5G45010"/>
<dbReference type="Araport" id="AT5G45010"/>
<dbReference type="TAIR" id="AT5G45010">
    <property type="gene designation" value="DSS1(V)"/>
</dbReference>
<dbReference type="eggNOG" id="KOG4764">
    <property type="taxonomic scope" value="Eukaryota"/>
</dbReference>
<dbReference type="HOGENOM" id="CLU_141774_1_1_1"/>
<dbReference type="InParanoid" id="Q9FL96"/>
<dbReference type="OMA" id="MVMVVKP"/>
<dbReference type="PhylomeDB" id="Q9FL96"/>
<dbReference type="PRO" id="PR:Q9FL96"/>
<dbReference type="Proteomes" id="UP000006548">
    <property type="component" value="Chromosome 5"/>
</dbReference>
<dbReference type="ExpressionAtlas" id="Q9FL96">
    <property type="expression patterns" value="baseline and differential"/>
</dbReference>
<dbReference type="GO" id="GO:0008541">
    <property type="term" value="C:proteasome regulatory particle, lid subcomplex"/>
    <property type="evidence" value="ECO:0007669"/>
    <property type="project" value="InterPro"/>
</dbReference>
<dbReference type="GO" id="GO:0006406">
    <property type="term" value="P:mRNA export from nucleus"/>
    <property type="evidence" value="ECO:0007669"/>
    <property type="project" value="InterPro"/>
</dbReference>
<dbReference type="GO" id="GO:0043248">
    <property type="term" value="P:proteasome assembly"/>
    <property type="evidence" value="ECO:0007669"/>
    <property type="project" value="InterPro"/>
</dbReference>
<dbReference type="GO" id="GO:0042542">
    <property type="term" value="P:response to hydrogen peroxide"/>
    <property type="evidence" value="ECO:0000270"/>
    <property type="project" value="TAIR"/>
</dbReference>
<dbReference type="InterPro" id="IPR007834">
    <property type="entry name" value="DSS1_SEM1"/>
</dbReference>
<dbReference type="PANTHER" id="PTHR16771">
    <property type="entry name" value="26 PROTEASOME COMPLEX SUBUNIT DSS1"/>
    <property type="match status" value="1"/>
</dbReference>
<dbReference type="PANTHER" id="PTHR16771:SF17">
    <property type="entry name" value="PROTEIN DELETION OF SUV3 SUPPRESSOR 1(I)-RELATED"/>
    <property type="match status" value="1"/>
</dbReference>
<dbReference type="Pfam" id="PF05160">
    <property type="entry name" value="DSS1_SEM1"/>
    <property type="match status" value="1"/>
</dbReference>
<dbReference type="SMART" id="SM01385">
    <property type="entry name" value="DSS1_SEM1"/>
    <property type="match status" value="1"/>
</dbReference>
<name>SEM12_ARATH</name>
<sequence length="73" mass="8698">MAAEPKAAVEVVKVDLFEDDDEFEEFEINEDWLEKEEVKEVSLQWEDDWDDDDVSDDFSRQLKKELENASEKK</sequence>